<evidence type="ECO:0000255" key="1">
    <source>
        <dbReference type="HAMAP-Rule" id="MF_00360"/>
    </source>
</evidence>
<evidence type="ECO:0000305" key="2"/>
<comment type="function">
    <text evidence="1">Binds together with bS18 to 16S ribosomal RNA.</text>
</comment>
<comment type="similarity">
    <text evidence="1">Belongs to the bacterial ribosomal protein bS6 family.</text>
</comment>
<comment type="sequence caution" evidence="2">
    <conflict type="erroneous initiation">
        <sequence resource="EMBL-CDS" id="CAE37761"/>
    </conflict>
</comment>
<protein>
    <recommendedName>
        <fullName evidence="1">Small ribosomal subunit protein bS6</fullName>
    </recommendedName>
    <alternativeName>
        <fullName evidence="2">30S ribosomal protein S6</fullName>
    </alternativeName>
</protein>
<organism>
    <name type="scientific">Bordetella parapertussis (strain 12822 / ATCC BAA-587 / NCTC 13253)</name>
    <dbReference type="NCBI Taxonomy" id="257311"/>
    <lineage>
        <taxon>Bacteria</taxon>
        <taxon>Pseudomonadati</taxon>
        <taxon>Pseudomonadota</taxon>
        <taxon>Betaproteobacteria</taxon>
        <taxon>Burkholderiales</taxon>
        <taxon>Alcaligenaceae</taxon>
        <taxon>Bordetella</taxon>
    </lineage>
</organism>
<keyword id="KW-0687">Ribonucleoprotein</keyword>
<keyword id="KW-0689">Ribosomal protein</keyword>
<keyword id="KW-0694">RNA-binding</keyword>
<keyword id="KW-0699">rRNA-binding</keyword>
<proteinExistence type="inferred from homology"/>
<accession>Q7W7P8</accession>
<sequence length="126" mass="14220">MRHYEVVFIVHPDQSEQVPAMVERYQALVTGQSGTVHRLEDWGRRQLAYPIQKLVKAHYVCMNIECGQATLDELEHSFRYNDAVLRHLVIKTKKAPAAPSIMMKSVEREEARKASAEAAATATAAE</sequence>
<feature type="chain" id="PRO_0000176735" description="Small ribosomal subunit protein bS6">
    <location>
        <begin position="1"/>
        <end position="126"/>
    </location>
</feature>
<name>RS6_BORPA</name>
<dbReference type="EMBL" id="BX640430">
    <property type="protein sequence ID" value="CAE37761.1"/>
    <property type="status" value="ALT_INIT"/>
    <property type="molecule type" value="Genomic_DNA"/>
</dbReference>
<dbReference type="RefSeq" id="WP_010926331.1">
    <property type="nucleotide sequence ID" value="NC_002928.3"/>
</dbReference>
<dbReference type="SMR" id="Q7W7P8"/>
<dbReference type="GeneID" id="93204250"/>
<dbReference type="KEGG" id="bpa:BPP2466"/>
<dbReference type="HOGENOM" id="CLU_113441_6_0_4"/>
<dbReference type="Proteomes" id="UP000001421">
    <property type="component" value="Chromosome"/>
</dbReference>
<dbReference type="GO" id="GO:0022627">
    <property type="term" value="C:cytosolic small ribosomal subunit"/>
    <property type="evidence" value="ECO:0007669"/>
    <property type="project" value="TreeGrafter"/>
</dbReference>
<dbReference type="GO" id="GO:0070181">
    <property type="term" value="F:small ribosomal subunit rRNA binding"/>
    <property type="evidence" value="ECO:0007669"/>
    <property type="project" value="TreeGrafter"/>
</dbReference>
<dbReference type="GO" id="GO:0003735">
    <property type="term" value="F:structural constituent of ribosome"/>
    <property type="evidence" value="ECO:0007669"/>
    <property type="project" value="InterPro"/>
</dbReference>
<dbReference type="GO" id="GO:0006412">
    <property type="term" value="P:translation"/>
    <property type="evidence" value="ECO:0007669"/>
    <property type="project" value="UniProtKB-UniRule"/>
</dbReference>
<dbReference type="CDD" id="cd00473">
    <property type="entry name" value="bS6"/>
    <property type="match status" value="1"/>
</dbReference>
<dbReference type="Gene3D" id="3.30.70.60">
    <property type="match status" value="1"/>
</dbReference>
<dbReference type="HAMAP" id="MF_00360">
    <property type="entry name" value="Ribosomal_bS6"/>
    <property type="match status" value="1"/>
</dbReference>
<dbReference type="InterPro" id="IPR000529">
    <property type="entry name" value="Ribosomal_bS6"/>
</dbReference>
<dbReference type="InterPro" id="IPR035980">
    <property type="entry name" value="Ribosomal_bS6_sf"/>
</dbReference>
<dbReference type="InterPro" id="IPR020814">
    <property type="entry name" value="Ribosomal_S6_plastid/chlpt"/>
</dbReference>
<dbReference type="InterPro" id="IPR014717">
    <property type="entry name" value="Transl_elong_EF1B/ribsomal_bS6"/>
</dbReference>
<dbReference type="NCBIfam" id="TIGR00166">
    <property type="entry name" value="S6"/>
    <property type="match status" value="1"/>
</dbReference>
<dbReference type="PANTHER" id="PTHR21011">
    <property type="entry name" value="MITOCHONDRIAL 28S RIBOSOMAL PROTEIN S6"/>
    <property type="match status" value="1"/>
</dbReference>
<dbReference type="PANTHER" id="PTHR21011:SF1">
    <property type="entry name" value="SMALL RIBOSOMAL SUBUNIT PROTEIN BS6M"/>
    <property type="match status" value="1"/>
</dbReference>
<dbReference type="Pfam" id="PF01250">
    <property type="entry name" value="Ribosomal_S6"/>
    <property type="match status" value="1"/>
</dbReference>
<dbReference type="SUPFAM" id="SSF54995">
    <property type="entry name" value="Ribosomal protein S6"/>
    <property type="match status" value="1"/>
</dbReference>
<gene>
    <name evidence="1" type="primary">rpsF</name>
    <name type="ordered locus">BPP2466</name>
</gene>
<reference key="1">
    <citation type="journal article" date="2003" name="Nat. Genet.">
        <title>Comparative analysis of the genome sequences of Bordetella pertussis, Bordetella parapertussis and Bordetella bronchiseptica.</title>
        <authorList>
            <person name="Parkhill J."/>
            <person name="Sebaihia M."/>
            <person name="Preston A."/>
            <person name="Murphy L.D."/>
            <person name="Thomson N.R."/>
            <person name="Harris D.E."/>
            <person name="Holden M.T.G."/>
            <person name="Churcher C.M."/>
            <person name="Bentley S.D."/>
            <person name="Mungall K.L."/>
            <person name="Cerdeno-Tarraga A.-M."/>
            <person name="Temple L."/>
            <person name="James K.D."/>
            <person name="Harris B."/>
            <person name="Quail M.A."/>
            <person name="Achtman M."/>
            <person name="Atkin R."/>
            <person name="Baker S."/>
            <person name="Basham D."/>
            <person name="Bason N."/>
            <person name="Cherevach I."/>
            <person name="Chillingworth T."/>
            <person name="Collins M."/>
            <person name="Cronin A."/>
            <person name="Davis P."/>
            <person name="Doggett J."/>
            <person name="Feltwell T."/>
            <person name="Goble A."/>
            <person name="Hamlin N."/>
            <person name="Hauser H."/>
            <person name="Holroyd S."/>
            <person name="Jagels K."/>
            <person name="Leather S."/>
            <person name="Moule S."/>
            <person name="Norberczak H."/>
            <person name="O'Neil S."/>
            <person name="Ormond D."/>
            <person name="Price C."/>
            <person name="Rabbinowitsch E."/>
            <person name="Rutter S."/>
            <person name="Sanders M."/>
            <person name="Saunders D."/>
            <person name="Seeger K."/>
            <person name="Sharp S."/>
            <person name="Simmonds M."/>
            <person name="Skelton J."/>
            <person name="Squares R."/>
            <person name="Squares S."/>
            <person name="Stevens K."/>
            <person name="Unwin L."/>
            <person name="Whitehead S."/>
            <person name="Barrell B.G."/>
            <person name="Maskell D.J."/>
        </authorList>
    </citation>
    <scope>NUCLEOTIDE SEQUENCE [LARGE SCALE GENOMIC DNA]</scope>
    <source>
        <strain>12822 / ATCC BAA-587 / NCTC 13253</strain>
    </source>
</reference>